<reference key="1">
    <citation type="journal article" date="2010" name="J. Bacteriol.">
        <title>Complete genome sequence of the aerobic facultative methanotroph Methylocella silvestris BL2.</title>
        <authorList>
            <person name="Chen Y."/>
            <person name="Crombie A."/>
            <person name="Rahman M.T."/>
            <person name="Dedysh S.N."/>
            <person name="Liesack W."/>
            <person name="Stott M.B."/>
            <person name="Alam M."/>
            <person name="Theisen A.R."/>
            <person name="Murrell J.C."/>
            <person name="Dunfield P.F."/>
        </authorList>
    </citation>
    <scope>NUCLEOTIDE SEQUENCE [LARGE SCALE GENOMIC DNA]</scope>
    <source>
        <strain>DSM 15510 / CIP 108128 / LMG 27833 / NCIMB 13906 / BL2</strain>
    </source>
</reference>
<organism>
    <name type="scientific">Methylocella silvestris (strain DSM 15510 / CIP 108128 / LMG 27833 / NCIMB 13906 / BL2)</name>
    <dbReference type="NCBI Taxonomy" id="395965"/>
    <lineage>
        <taxon>Bacteria</taxon>
        <taxon>Pseudomonadati</taxon>
        <taxon>Pseudomonadota</taxon>
        <taxon>Alphaproteobacteria</taxon>
        <taxon>Hyphomicrobiales</taxon>
        <taxon>Beijerinckiaceae</taxon>
        <taxon>Methylocella</taxon>
    </lineage>
</organism>
<protein>
    <recommendedName>
        <fullName evidence="1">tRNA dimethylallyltransferase</fullName>
        <ecNumber evidence="1">2.5.1.75</ecNumber>
    </recommendedName>
    <alternativeName>
        <fullName evidence="1">Dimethylallyl diphosphate:tRNA dimethylallyltransferase</fullName>
        <shortName evidence="1">DMAPP:tRNA dimethylallyltransferase</shortName>
        <shortName evidence="1">DMATase</shortName>
    </alternativeName>
    <alternativeName>
        <fullName evidence="1">Isopentenyl-diphosphate:tRNA isopentenyltransferase</fullName>
        <shortName evidence="1">IPP transferase</shortName>
        <shortName evidence="1">IPPT</shortName>
        <shortName evidence="1">IPTase</shortName>
    </alternativeName>
</protein>
<feature type="chain" id="PRO_0000377222" description="tRNA dimethylallyltransferase">
    <location>
        <begin position="1"/>
        <end position="303"/>
    </location>
</feature>
<feature type="region of interest" description="Interaction with substrate tRNA" evidence="1">
    <location>
        <begin position="38"/>
        <end position="41"/>
    </location>
</feature>
<feature type="region of interest" description="Interaction with substrate tRNA" evidence="1">
    <location>
        <begin position="162"/>
        <end position="166"/>
    </location>
</feature>
<feature type="binding site" evidence="1">
    <location>
        <begin position="13"/>
        <end position="20"/>
    </location>
    <ligand>
        <name>ATP</name>
        <dbReference type="ChEBI" id="CHEBI:30616"/>
    </ligand>
</feature>
<feature type="binding site" evidence="1">
    <location>
        <begin position="15"/>
        <end position="20"/>
    </location>
    <ligand>
        <name>substrate</name>
    </ligand>
</feature>
<feature type="site" description="Interaction with substrate tRNA" evidence="1">
    <location>
        <position position="104"/>
    </location>
</feature>
<feature type="site" description="Interaction with substrate tRNA" evidence="1">
    <location>
        <position position="126"/>
    </location>
</feature>
<name>MIAA_METSB</name>
<comment type="function">
    <text evidence="1">Catalyzes the transfer of a dimethylallyl group onto the adenine at position 37 in tRNAs that read codons beginning with uridine, leading to the formation of N6-(dimethylallyl)adenosine (i(6)A).</text>
</comment>
<comment type="catalytic activity">
    <reaction evidence="1">
        <text>adenosine(37) in tRNA + dimethylallyl diphosphate = N(6)-dimethylallyladenosine(37) in tRNA + diphosphate</text>
        <dbReference type="Rhea" id="RHEA:26482"/>
        <dbReference type="Rhea" id="RHEA-COMP:10162"/>
        <dbReference type="Rhea" id="RHEA-COMP:10375"/>
        <dbReference type="ChEBI" id="CHEBI:33019"/>
        <dbReference type="ChEBI" id="CHEBI:57623"/>
        <dbReference type="ChEBI" id="CHEBI:74411"/>
        <dbReference type="ChEBI" id="CHEBI:74415"/>
        <dbReference type="EC" id="2.5.1.75"/>
    </reaction>
</comment>
<comment type="cofactor">
    <cofactor evidence="1">
        <name>Mg(2+)</name>
        <dbReference type="ChEBI" id="CHEBI:18420"/>
    </cofactor>
</comment>
<comment type="subunit">
    <text evidence="1">Monomer.</text>
</comment>
<comment type="similarity">
    <text evidence="1">Belongs to the IPP transferase family.</text>
</comment>
<evidence type="ECO:0000255" key="1">
    <source>
        <dbReference type="HAMAP-Rule" id="MF_00185"/>
    </source>
</evidence>
<dbReference type="EC" id="2.5.1.75" evidence="1"/>
<dbReference type="EMBL" id="CP001280">
    <property type="protein sequence ID" value="ACK52131.1"/>
    <property type="molecule type" value="Genomic_DNA"/>
</dbReference>
<dbReference type="RefSeq" id="WP_012592200.1">
    <property type="nucleotide sequence ID" value="NC_011666.1"/>
</dbReference>
<dbReference type="SMR" id="B8EQB8"/>
<dbReference type="STRING" id="395965.Msil_3224"/>
<dbReference type="KEGG" id="msl:Msil_3224"/>
<dbReference type="eggNOG" id="COG0324">
    <property type="taxonomic scope" value="Bacteria"/>
</dbReference>
<dbReference type="HOGENOM" id="CLU_032616_0_1_5"/>
<dbReference type="OrthoDB" id="9776390at2"/>
<dbReference type="Proteomes" id="UP000002257">
    <property type="component" value="Chromosome"/>
</dbReference>
<dbReference type="GO" id="GO:0005524">
    <property type="term" value="F:ATP binding"/>
    <property type="evidence" value="ECO:0007669"/>
    <property type="project" value="UniProtKB-UniRule"/>
</dbReference>
<dbReference type="GO" id="GO:0052381">
    <property type="term" value="F:tRNA dimethylallyltransferase activity"/>
    <property type="evidence" value="ECO:0007669"/>
    <property type="project" value="UniProtKB-UniRule"/>
</dbReference>
<dbReference type="GO" id="GO:0006400">
    <property type="term" value="P:tRNA modification"/>
    <property type="evidence" value="ECO:0007669"/>
    <property type="project" value="TreeGrafter"/>
</dbReference>
<dbReference type="Gene3D" id="1.10.20.140">
    <property type="match status" value="1"/>
</dbReference>
<dbReference type="Gene3D" id="3.40.50.300">
    <property type="entry name" value="P-loop containing nucleotide triphosphate hydrolases"/>
    <property type="match status" value="1"/>
</dbReference>
<dbReference type="HAMAP" id="MF_00185">
    <property type="entry name" value="IPP_trans"/>
    <property type="match status" value="1"/>
</dbReference>
<dbReference type="InterPro" id="IPR039657">
    <property type="entry name" value="Dimethylallyltransferase"/>
</dbReference>
<dbReference type="InterPro" id="IPR018022">
    <property type="entry name" value="IPT"/>
</dbReference>
<dbReference type="InterPro" id="IPR027417">
    <property type="entry name" value="P-loop_NTPase"/>
</dbReference>
<dbReference type="NCBIfam" id="TIGR00174">
    <property type="entry name" value="miaA"/>
    <property type="match status" value="1"/>
</dbReference>
<dbReference type="PANTHER" id="PTHR11088">
    <property type="entry name" value="TRNA DIMETHYLALLYLTRANSFERASE"/>
    <property type="match status" value="1"/>
</dbReference>
<dbReference type="PANTHER" id="PTHR11088:SF60">
    <property type="entry name" value="TRNA DIMETHYLALLYLTRANSFERASE"/>
    <property type="match status" value="1"/>
</dbReference>
<dbReference type="Pfam" id="PF01715">
    <property type="entry name" value="IPPT"/>
    <property type="match status" value="1"/>
</dbReference>
<dbReference type="SUPFAM" id="SSF52540">
    <property type="entry name" value="P-loop containing nucleoside triphosphate hydrolases"/>
    <property type="match status" value="1"/>
</dbReference>
<sequence length="303" mass="32913">MAAAKFTALLIAGPTASGKSALALRLAEKLGGILINADSMQVYRDLRILSARPSAEEELRAPHRLFGAIDGAVNFSVGLWLEAARNILEEARQAGALPIFVGGTGLYFKALTQGLSDIPAVPDDIRAKLRARTEGVAATELHAELSARDPLMAARLRPSDPQRLLRALEVLEATGRSLASFQSRRGPPVLDPAATRAIFLSPERAALNLRIDERFEAMLASGAWAEVEALRRRGLDPALPLMRAHGVPHLIAHLEGKIPQDEAIRLGKRDTRAYARRQFTFARHQLPGFVWAEPREAEALALA</sequence>
<accession>B8EQB8</accession>
<gene>
    <name evidence="1" type="primary">miaA</name>
    <name type="ordered locus">Msil_3224</name>
</gene>
<keyword id="KW-0067">ATP-binding</keyword>
<keyword id="KW-0460">Magnesium</keyword>
<keyword id="KW-0547">Nucleotide-binding</keyword>
<keyword id="KW-1185">Reference proteome</keyword>
<keyword id="KW-0808">Transferase</keyword>
<keyword id="KW-0819">tRNA processing</keyword>
<proteinExistence type="inferred from homology"/>